<feature type="chain" id="PRO_1000201512" description="Ribosomal RNA large subunit methyltransferase M">
    <location>
        <begin position="1"/>
        <end position="366"/>
    </location>
</feature>
<feature type="active site" description="Proton acceptor" evidence="1">
    <location>
        <position position="306"/>
    </location>
</feature>
<feature type="binding site" evidence="1">
    <location>
        <position position="188"/>
    </location>
    <ligand>
        <name>S-adenosyl-L-methionine</name>
        <dbReference type="ChEBI" id="CHEBI:59789"/>
    </ligand>
</feature>
<feature type="binding site" evidence="1">
    <location>
        <begin position="221"/>
        <end position="224"/>
    </location>
    <ligand>
        <name>S-adenosyl-L-methionine</name>
        <dbReference type="ChEBI" id="CHEBI:59789"/>
    </ligand>
</feature>
<feature type="binding site" evidence="1">
    <location>
        <position position="240"/>
    </location>
    <ligand>
        <name>S-adenosyl-L-methionine</name>
        <dbReference type="ChEBI" id="CHEBI:59789"/>
    </ligand>
</feature>
<feature type="binding site" evidence="1">
    <location>
        <position position="260"/>
    </location>
    <ligand>
        <name>S-adenosyl-L-methionine</name>
        <dbReference type="ChEBI" id="CHEBI:59789"/>
    </ligand>
</feature>
<feature type="binding site" evidence="1">
    <location>
        <position position="277"/>
    </location>
    <ligand>
        <name>S-adenosyl-L-methionine</name>
        <dbReference type="ChEBI" id="CHEBI:59789"/>
    </ligand>
</feature>
<proteinExistence type="inferred from homology"/>
<protein>
    <recommendedName>
        <fullName evidence="1">Ribosomal RNA large subunit methyltransferase M</fullName>
        <ecNumber evidence="1">2.1.1.186</ecNumber>
    </recommendedName>
    <alternativeName>
        <fullName evidence="1">23S rRNA (cytidine2498-2'-O)-methyltransferase</fullName>
    </alternativeName>
    <alternativeName>
        <fullName evidence="1">23S rRNA 2'-O-ribose methyltransferase RlmM</fullName>
    </alternativeName>
</protein>
<dbReference type="EC" id="2.1.1.186" evidence="1"/>
<dbReference type="EMBL" id="CP000948">
    <property type="protein sequence ID" value="ACB03919.1"/>
    <property type="molecule type" value="Genomic_DNA"/>
</dbReference>
<dbReference type="RefSeq" id="WP_001045520.1">
    <property type="nucleotide sequence ID" value="NC_010473.1"/>
</dbReference>
<dbReference type="SMR" id="B1XDL5"/>
<dbReference type="DNASU" id="6061903"/>
<dbReference type="GeneID" id="75203803"/>
<dbReference type="KEGG" id="ecd:ECDH10B_2975"/>
<dbReference type="HOGENOM" id="CLU_043780_0_0_6"/>
<dbReference type="GO" id="GO:0005737">
    <property type="term" value="C:cytoplasm"/>
    <property type="evidence" value="ECO:0007669"/>
    <property type="project" value="UniProtKB-SubCell"/>
</dbReference>
<dbReference type="GO" id="GO:0008757">
    <property type="term" value="F:S-adenosylmethionine-dependent methyltransferase activity"/>
    <property type="evidence" value="ECO:0007669"/>
    <property type="project" value="UniProtKB-UniRule"/>
</dbReference>
<dbReference type="GO" id="GO:0032259">
    <property type="term" value="P:methylation"/>
    <property type="evidence" value="ECO:0007669"/>
    <property type="project" value="UniProtKB-KW"/>
</dbReference>
<dbReference type="GO" id="GO:0006364">
    <property type="term" value="P:rRNA processing"/>
    <property type="evidence" value="ECO:0007669"/>
    <property type="project" value="UniProtKB-UniRule"/>
</dbReference>
<dbReference type="FunFam" id="3.30.2300.20:FF:000001">
    <property type="entry name" value="Ribosomal RNA large subunit methyltransferase M"/>
    <property type="match status" value="1"/>
</dbReference>
<dbReference type="FunFam" id="3.30.70.2810:FF:000001">
    <property type="entry name" value="Ribosomal RNA large subunit methyltransferase M"/>
    <property type="match status" value="1"/>
</dbReference>
<dbReference type="FunFam" id="3.40.50.150:FF:000020">
    <property type="entry name" value="Ribosomal RNA large subunit methyltransferase M"/>
    <property type="match status" value="1"/>
</dbReference>
<dbReference type="Gene3D" id="3.30.2300.20">
    <property type="match status" value="1"/>
</dbReference>
<dbReference type="Gene3D" id="3.30.70.2810">
    <property type="match status" value="1"/>
</dbReference>
<dbReference type="Gene3D" id="3.40.50.150">
    <property type="entry name" value="Vaccinia Virus protein VP39"/>
    <property type="match status" value="1"/>
</dbReference>
<dbReference type="HAMAP" id="MF_01551">
    <property type="entry name" value="23SrRNA_methyltr_M"/>
    <property type="match status" value="1"/>
</dbReference>
<dbReference type="InterPro" id="IPR040739">
    <property type="entry name" value="RlmM_FDX"/>
</dbReference>
<dbReference type="InterPro" id="IPR048646">
    <property type="entry name" value="RlmM_THUMP-like"/>
</dbReference>
<dbReference type="InterPro" id="IPR002877">
    <property type="entry name" value="RNA_MeTrfase_FtsJ_dom"/>
</dbReference>
<dbReference type="InterPro" id="IPR011224">
    <property type="entry name" value="rRNA_MeTrfase_M"/>
</dbReference>
<dbReference type="InterPro" id="IPR029063">
    <property type="entry name" value="SAM-dependent_MTases_sf"/>
</dbReference>
<dbReference type="NCBIfam" id="NF008734">
    <property type="entry name" value="PRK11760.1"/>
    <property type="match status" value="1"/>
</dbReference>
<dbReference type="PANTHER" id="PTHR37524">
    <property type="entry name" value="RIBOSOMAL RNA LARGE SUBUNIT METHYLTRANSFERASE M"/>
    <property type="match status" value="1"/>
</dbReference>
<dbReference type="PANTHER" id="PTHR37524:SF2">
    <property type="entry name" value="RIBOSOMAL RNA METHYLTRANSFERASE FTSJ DOMAIN-CONTAINING PROTEIN"/>
    <property type="match status" value="1"/>
</dbReference>
<dbReference type="Pfam" id="PF01728">
    <property type="entry name" value="FtsJ"/>
    <property type="match status" value="1"/>
</dbReference>
<dbReference type="Pfam" id="PF18125">
    <property type="entry name" value="RlmM_FDX"/>
    <property type="match status" value="1"/>
</dbReference>
<dbReference type="Pfam" id="PF21239">
    <property type="entry name" value="RLMM_N"/>
    <property type="match status" value="1"/>
</dbReference>
<dbReference type="PIRSF" id="PIRSF028774">
    <property type="entry name" value="UCP028774"/>
    <property type="match status" value="1"/>
</dbReference>
<dbReference type="SUPFAM" id="SSF53335">
    <property type="entry name" value="S-adenosyl-L-methionine-dependent methyltransferases"/>
    <property type="match status" value="1"/>
</dbReference>
<sequence>MNKVVLLCRPGFEKECAAEITDKAGQREIFGFARVKENAGYVIYECYQPDDGDKLIRELPFSSLIFARQWFVVGELLQHLPPEDRITPIVGMLQGVVEKGGELRVEVADTNESKELLKFCRKFTVPLRAALRDAGVLANYETPKRPVVHVFFIAPGCCYTGYSYSNNNSPFYMGIPRLKFPADAPSRSTLKLEEAFHVFIPADEWDERLANGMWAVDLGACPGGWTYQLVKRNMWVYSVDNGPMAQSLMDTGQVTWLREDGFKFRPTRSNISWMVCDMVEKPAKVAALMAQWLVNGWCRETIFNLKLPMKKRYEEVSHNLAYIQAQLDEHGINAQIQARQLYHDREEVTVHVRRIWAAVGGRRDER</sequence>
<gene>
    <name evidence="1" type="primary">rlmM</name>
    <name type="ordered locus">ECDH10B_2975</name>
</gene>
<evidence type="ECO:0000255" key="1">
    <source>
        <dbReference type="HAMAP-Rule" id="MF_01551"/>
    </source>
</evidence>
<comment type="function">
    <text evidence="1">Catalyzes the 2'-O-methylation at nucleotide C2498 in 23S rRNA.</text>
</comment>
<comment type="catalytic activity">
    <reaction evidence="1">
        <text>cytidine(2498) in 23S rRNA + S-adenosyl-L-methionine = 2'-O-methylcytidine(2498) in 23S rRNA + S-adenosyl-L-homocysteine + H(+)</text>
        <dbReference type="Rhea" id="RHEA:42788"/>
        <dbReference type="Rhea" id="RHEA-COMP:10244"/>
        <dbReference type="Rhea" id="RHEA-COMP:10245"/>
        <dbReference type="ChEBI" id="CHEBI:15378"/>
        <dbReference type="ChEBI" id="CHEBI:57856"/>
        <dbReference type="ChEBI" id="CHEBI:59789"/>
        <dbReference type="ChEBI" id="CHEBI:74495"/>
        <dbReference type="ChEBI" id="CHEBI:82748"/>
        <dbReference type="EC" id="2.1.1.186"/>
    </reaction>
</comment>
<comment type="subunit">
    <text evidence="1">Monomer.</text>
</comment>
<comment type="subcellular location">
    <subcellularLocation>
        <location evidence="1">Cytoplasm</location>
    </subcellularLocation>
</comment>
<comment type="similarity">
    <text evidence="1">Belongs to the class I-like SAM-binding methyltransferase superfamily. RNA methyltransferase RlmE family. RlmM subfamily.</text>
</comment>
<accession>B1XDL5</accession>
<name>RLMM_ECODH</name>
<reference key="1">
    <citation type="journal article" date="2008" name="J. Bacteriol.">
        <title>The complete genome sequence of Escherichia coli DH10B: insights into the biology of a laboratory workhorse.</title>
        <authorList>
            <person name="Durfee T."/>
            <person name="Nelson R."/>
            <person name="Baldwin S."/>
            <person name="Plunkett G. III"/>
            <person name="Burland V."/>
            <person name="Mau B."/>
            <person name="Petrosino J.F."/>
            <person name="Qin X."/>
            <person name="Muzny D.M."/>
            <person name="Ayele M."/>
            <person name="Gibbs R.A."/>
            <person name="Csorgo B."/>
            <person name="Posfai G."/>
            <person name="Weinstock G.M."/>
            <person name="Blattner F.R."/>
        </authorList>
    </citation>
    <scope>NUCLEOTIDE SEQUENCE [LARGE SCALE GENOMIC DNA]</scope>
    <source>
        <strain>K12 / DH10B</strain>
    </source>
</reference>
<organism>
    <name type="scientific">Escherichia coli (strain K12 / DH10B)</name>
    <dbReference type="NCBI Taxonomy" id="316385"/>
    <lineage>
        <taxon>Bacteria</taxon>
        <taxon>Pseudomonadati</taxon>
        <taxon>Pseudomonadota</taxon>
        <taxon>Gammaproteobacteria</taxon>
        <taxon>Enterobacterales</taxon>
        <taxon>Enterobacteriaceae</taxon>
        <taxon>Escherichia</taxon>
    </lineage>
</organism>
<keyword id="KW-0963">Cytoplasm</keyword>
<keyword id="KW-0489">Methyltransferase</keyword>
<keyword id="KW-0698">rRNA processing</keyword>
<keyword id="KW-0949">S-adenosyl-L-methionine</keyword>
<keyword id="KW-0808">Transferase</keyword>